<organism>
    <name type="scientific">Streptococcus pneumoniae serotype 4 (strain ATCC BAA-334 / TIGR4)</name>
    <dbReference type="NCBI Taxonomy" id="170187"/>
    <lineage>
        <taxon>Bacteria</taxon>
        <taxon>Bacillati</taxon>
        <taxon>Bacillota</taxon>
        <taxon>Bacilli</taxon>
        <taxon>Lactobacillales</taxon>
        <taxon>Streptococcaceae</taxon>
        <taxon>Streptococcus</taxon>
    </lineage>
</organism>
<sequence length="346" mass="37362">MAEITAKLVKELREKSGAGVMDAKKALVETDGDIEKAIELLREKGMAKAAKKADRVAAEGLTGVYVNGNVAAVIEVNAETDFVAKNAQFVELVNTTAKVIAEGKPANNEEALALIMPSGETLEAAYVSATATIGEKISFRRFALIEKTDAQHFGAYQHNGGRIGVISVVEGGDEALAKQLSMHIAAMKPTVLSYKELDEQFVKDELAQLNHVIDQDNESRAMVNKPALPHLKYGSKAQLTDDVIAQAEADIKAELAAEGKPEKIWDKIIPGKMDRFMLDNTKVDQAYTLLAQVYIMDDSKTVEAYLESVNASVVEFARFEVGEGIEKAANDFEAEVAATMAAALNN</sequence>
<reference key="1">
    <citation type="journal article" date="2001" name="Science">
        <title>Complete genome sequence of a virulent isolate of Streptococcus pneumoniae.</title>
        <authorList>
            <person name="Tettelin H."/>
            <person name="Nelson K.E."/>
            <person name="Paulsen I.T."/>
            <person name="Eisen J.A."/>
            <person name="Read T.D."/>
            <person name="Peterson S.N."/>
            <person name="Heidelberg J.F."/>
            <person name="DeBoy R.T."/>
            <person name="Haft D.H."/>
            <person name="Dodson R.J."/>
            <person name="Durkin A.S."/>
            <person name="Gwinn M.L."/>
            <person name="Kolonay J.F."/>
            <person name="Nelson W.C."/>
            <person name="Peterson J.D."/>
            <person name="Umayam L.A."/>
            <person name="White O."/>
            <person name="Salzberg S.L."/>
            <person name="Lewis M.R."/>
            <person name="Radune D."/>
            <person name="Holtzapple E.K."/>
            <person name="Khouri H.M."/>
            <person name="Wolf A.M."/>
            <person name="Utterback T.R."/>
            <person name="Hansen C.L."/>
            <person name="McDonald L.A."/>
            <person name="Feldblyum T.V."/>
            <person name="Angiuoli S.V."/>
            <person name="Dickinson T."/>
            <person name="Hickey E.K."/>
            <person name="Holt I.E."/>
            <person name="Loftus B.J."/>
            <person name="Yang F."/>
            <person name="Smith H.O."/>
            <person name="Venter J.C."/>
            <person name="Dougherty B.A."/>
            <person name="Morrison D.A."/>
            <person name="Hollingshead S.K."/>
            <person name="Fraser C.M."/>
        </authorList>
    </citation>
    <scope>NUCLEOTIDE SEQUENCE [LARGE SCALE GENOMIC DNA]</scope>
    <source>
        <strain>ATCC BAA-334 / TIGR4</strain>
    </source>
</reference>
<reference key="2">
    <citation type="journal article" date="1997" name="Microbiology">
        <title>Monoclonal antibodies against Streptococcus pneumoniae detect epitopes on eubacterial ribosomal proteins L7/L12 and on streptococcal elongation factor Ts.</title>
        <authorList>
            <person name="Kolberg J."/>
            <person name="Hoiby E.A."/>
            <person name="Lopez R."/>
            <person name="Sletten K."/>
        </authorList>
    </citation>
    <scope>PROTEIN SEQUENCE OF 2-29</scope>
</reference>
<proteinExistence type="evidence at protein level"/>
<feature type="initiator methionine" description="Removed" evidence="2">
    <location>
        <position position="1"/>
    </location>
</feature>
<feature type="chain" id="PRO_0000161208" description="Elongation factor Ts">
    <location>
        <begin position="2"/>
        <end position="346"/>
    </location>
</feature>
<feature type="region of interest" description="Involved in Mg(2+) ion dislocation from EF-Tu" evidence="1">
    <location>
        <begin position="80"/>
        <end position="83"/>
    </location>
</feature>
<evidence type="ECO:0000250" key="1"/>
<evidence type="ECO:0000269" key="2">
    <source>
    </source>
</evidence>
<evidence type="ECO:0000305" key="3"/>
<protein>
    <recommendedName>
        <fullName>Elongation factor Ts</fullName>
        <shortName>EF-Ts</shortName>
    </recommendedName>
</protein>
<keyword id="KW-0963">Cytoplasm</keyword>
<keyword id="KW-0903">Direct protein sequencing</keyword>
<keyword id="KW-0251">Elongation factor</keyword>
<keyword id="KW-0648">Protein biosynthesis</keyword>
<keyword id="KW-1185">Reference proteome</keyword>
<dbReference type="EMBL" id="AE005672">
    <property type="protein sequence ID" value="AAK76262.1"/>
    <property type="molecule type" value="Genomic_DNA"/>
</dbReference>
<dbReference type="PIR" id="E95258">
    <property type="entry name" value="E95258"/>
</dbReference>
<dbReference type="RefSeq" id="WP_000808063.1">
    <property type="nucleotide sequence ID" value="NZ_CP155539.1"/>
</dbReference>
<dbReference type="SMR" id="P0A3B7"/>
<dbReference type="PaxDb" id="170187-SP_2214"/>
<dbReference type="EnsemblBacteria" id="AAK76262">
    <property type="protein sequence ID" value="AAK76262"/>
    <property type="gene ID" value="SP_2214"/>
</dbReference>
<dbReference type="GeneID" id="45652566"/>
<dbReference type="KEGG" id="spn:SP_2214"/>
<dbReference type="eggNOG" id="COG0264">
    <property type="taxonomic scope" value="Bacteria"/>
</dbReference>
<dbReference type="BioCyc" id="SPNE170187:G1FZB-2314-MONOMER"/>
<dbReference type="Proteomes" id="UP000000585">
    <property type="component" value="Chromosome"/>
</dbReference>
<dbReference type="GO" id="GO:0005737">
    <property type="term" value="C:cytoplasm"/>
    <property type="evidence" value="ECO:0007669"/>
    <property type="project" value="UniProtKB-SubCell"/>
</dbReference>
<dbReference type="GO" id="GO:0003746">
    <property type="term" value="F:translation elongation factor activity"/>
    <property type="evidence" value="ECO:0007669"/>
    <property type="project" value="UniProtKB-UniRule"/>
</dbReference>
<dbReference type="CDD" id="cd14275">
    <property type="entry name" value="UBA_EF-Ts"/>
    <property type="match status" value="1"/>
</dbReference>
<dbReference type="FunFam" id="1.10.286.20:FF:000004">
    <property type="entry name" value="Elongation factor Ts"/>
    <property type="match status" value="1"/>
</dbReference>
<dbReference type="FunFam" id="1.10.8.10:FF:000001">
    <property type="entry name" value="Elongation factor Ts"/>
    <property type="match status" value="1"/>
</dbReference>
<dbReference type="FunFam" id="3.30.479.20:FF:000009">
    <property type="entry name" value="Elongation factor Ts"/>
    <property type="match status" value="1"/>
</dbReference>
<dbReference type="FunFam" id="3.30.479.20:FF:000013">
    <property type="entry name" value="Elongation factor Ts"/>
    <property type="match status" value="1"/>
</dbReference>
<dbReference type="FunFam" id="3.30.479.20:FF:000016">
    <property type="entry name" value="Elongation factor Ts"/>
    <property type="match status" value="1"/>
</dbReference>
<dbReference type="Gene3D" id="1.10.286.20">
    <property type="match status" value="1"/>
</dbReference>
<dbReference type="Gene3D" id="1.10.8.10">
    <property type="entry name" value="DNA helicase RuvA subunit, C-terminal domain"/>
    <property type="match status" value="1"/>
</dbReference>
<dbReference type="Gene3D" id="3.30.479.20">
    <property type="entry name" value="Elongation factor Ts, dimerisation domain"/>
    <property type="match status" value="2"/>
</dbReference>
<dbReference type="HAMAP" id="MF_00050">
    <property type="entry name" value="EF_Ts"/>
    <property type="match status" value="1"/>
</dbReference>
<dbReference type="InterPro" id="IPR036402">
    <property type="entry name" value="EF-Ts_dimer_sf"/>
</dbReference>
<dbReference type="InterPro" id="IPR001816">
    <property type="entry name" value="Transl_elong_EFTs/EF1B"/>
</dbReference>
<dbReference type="InterPro" id="IPR014039">
    <property type="entry name" value="Transl_elong_EFTs/EF1B_dimer"/>
</dbReference>
<dbReference type="InterPro" id="IPR018101">
    <property type="entry name" value="Transl_elong_Ts_CS"/>
</dbReference>
<dbReference type="InterPro" id="IPR009060">
    <property type="entry name" value="UBA-like_sf"/>
</dbReference>
<dbReference type="NCBIfam" id="TIGR00116">
    <property type="entry name" value="tsf"/>
    <property type="match status" value="1"/>
</dbReference>
<dbReference type="PANTHER" id="PTHR11741">
    <property type="entry name" value="ELONGATION FACTOR TS"/>
    <property type="match status" value="1"/>
</dbReference>
<dbReference type="PANTHER" id="PTHR11741:SF0">
    <property type="entry name" value="ELONGATION FACTOR TS, MITOCHONDRIAL"/>
    <property type="match status" value="1"/>
</dbReference>
<dbReference type="Pfam" id="PF00889">
    <property type="entry name" value="EF_TS"/>
    <property type="match status" value="1"/>
</dbReference>
<dbReference type="SUPFAM" id="SSF54713">
    <property type="entry name" value="Elongation factor Ts (EF-Ts), dimerisation domain"/>
    <property type="match status" value="2"/>
</dbReference>
<dbReference type="SUPFAM" id="SSF46934">
    <property type="entry name" value="UBA-like"/>
    <property type="match status" value="1"/>
</dbReference>
<dbReference type="PROSITE" id="PS01126">
    <property type="entry name" value="EF_TS_1"/>
    <property type="match status" value="1"/>
</dbReference>
<dbReference type="PROSITE" id="PS01127">
    <property type="entry name" value="EF_TS_2"/>
    <property type="match status" value="1"/>
</dbReference>
<name>EFTS_STRPN</name>
<gene>
    <name type="primary">tsf</name>
    <name type="ordered locus">SP_2214</name>
</gene>
<accession>P0A3B7</accession>
<accession>P80715</accession>
<comment type="function">
    <text evidence="1">Associates with the EF-Tu.GDP complex and induces the exchange of GDP to GTP. It remains bound to the aminoacyl-tRNA.EF-Tu.GTP complex up to the GTP hydrolysis stage on the ribosome (By similarity).</text>
</comment>
<comment type="subcellular location">
    <subcellularLocation>
        <location evidence="1">Cytoplasm</location>
    </subcellularLocation>
</comment>
<comment type="similarity">
    <text evidence="3">Belongs to the EF-Ts family.</text>
</comment>